<gene>
    <name type="primary">BHLH62</name>
    <name type="synonym">CIB3</name>
    <name type="synonym">EN85</name>
    <name type="ordered locus">At3g07340</name>
    <name type="ORF">F21O3.5</name>
</gene>
<reference key="1">
    <citation type="journal article" date="2000" name="Nature">
        <title>Sequence and analysis of chromosome 3 of the plant Arabidopsis thaliana.</title>
        <authorList>
            <person name="Salanoubat M."/>
            <person name="Lemcke K."/>
            <person name="Rieger M."/>
            <person name="Ansorge W."/>
            <person name="Unseld M."/>
            <person name="Fartmann B."/>
            <person name="Valle G."/>
            <person name="Bloecker H."/>
            <person name="Perez-Alonso M."/>
            <person name="Obermaier B."/>
            <person name="Delseny M."/>
            <person name="Boutry M."/>
            <person name="Grivell L.A."/>
            <person name="Mache R."/>
            <person name="Puigdomenech P."/>
            <person name="De Simone V."/>
            <person name="Choisne N."/>
            <person name="Artiguenave F."/>
            <person name="Robert C."/>
            <person name="Brottier P."/>
            <person name="Wincker P."/>
            <person name="Cattolico L."/>
            <person name="Weissenbach J."/>
            <person name="Saurin W."/>
            <person name="Quetier F."/>
            <person name="Schaefer M."/>
            <person name="Mueller-Auer S."/>
            <person name="Gabel C."/>
            <person name="Fuchs M."/>
            <person name="Benes V."/>
            <person name="Wurmbach E."/>
            <person name="Drzonek H."/>
            <person name="Erfle H."/>
            <person name="Jordan N."/>
            <person name="Bangert S."/>
            <person name="Wiedelmann R."/>
            <person name="Kranz H."/>
            <person name="Voss H."/>
            <person name="Holland R."/>
            <person name="Brandt P."/>
            <person name="Nyakatura G."/>
            <person name="Vezzi A."/>
            <person name="D'Angelo M."/>
            <person name="Pallavicini A."/>
            <person name="Toppo S."/>
            <person name="Simionati B."/>
            <person name="Conrad A."/>
            <person name="Hornischer K."/>
            <person name="Kauer G."/>
            <person name="Loehnert T.-H."/>
            <person name="Nordsiek G."/>
            <person name="Reichelt J."/>
            <person name="Scharfe M."/>
            <person name="Schoen O."/>
            <person name="Bargues M."/>
            <person name="Terol J."/>
            <person name="Climent J."/>
            <person name="Navarro P."/>
            <person name="Collado C."/>
            <person name="Perez-Perez A."/>
            <person name="Ottenwaelder B."/>
            <person name="Duchemin D."/>
            <person name="Cooke R."/>
            <person name="Laudie M."/>
            <person name="Berger-Llauro C."/>
            <person name="Purnelle B."/>
            <person name="Masuy D."/>
            <person name="de Haan M."/>
            <person name="Maarse A.C."/>
            <person name="Alcaraz J.-P."/>
            <person name="Cottet A."/>
            <person name="Casacuberta E."/>
            <person name="Monfort A."/>
            <person name="Argiriou A."/>
            <person name="Flores M."/>
            <person name="Liguori R."/>
            <person name="Vitale D."/>
            <person name="Mannhaupt G."/>
            <person name="Haase D."/>
            <person name="Schoof H."/>
            <person name="Rudd S."/>
            <person name="Zaccaria P."/>
            <person name="Mewes H.-W."/>
            <person name="Mayer K.F.X."/>
            <person name="Kaul S."/>
            <person name="Town C.D."/>
            <person name="Koo H.L."/>
            <person name="Tallon L.J."/>
            <person name="Jenkins J."/>
            <person name="Rooney T."/>
            <person name="Rizzo M."/>
            <person name="Walts A."/>
            <person name="Utterback T."/>
            <person name="Fujii C.Y."/>
            <person name="Shea T.P."/>
            <person name="Creasy T.H."/>
            <person name="Haas B."/>
            <person name="Maiti R."/>
            <person name="Wu D."/>
            <person name="Peterson J."/>
            <person name="Van Aken S."/>
            <person name="Pai G."/>
            <person name="Militscher J."/>
            <person name="Sellers P."/>
            <person name="Gill J.E."/>
            <person name="Feldblyum T.V."/>
            <person name="Preuss D."/>
            <person name="Lin X."/>
            <person name="Nierman W.C."/>
            <person name="Salzberg S.L."/>
            <person name="White O."/>
            <person name="Venter J.C."/>
            <person name="Fraser C.M."/>
            <person name="Kaneko T."/>
            <person name="Nakamura Y."/>
            <person name="Sato S."/>
            <person name="Kato T."/>
            <person name="Asamizu E."/>
            <person name="Sasamoto S."/>
            <person name="Kimura T."/>
            <person name="Idesawa K."/>
            <person name="Kawashima K."/>
            <person name="Kishida Y."/>
            <person name="Kiyokawa C."/>
            <person name="Kohara M."/>
            <person name="Matsumoto M."/>
            <person name="Matsuno A."/>
            <person name="Muraki A."/>
            <person name="Nakayama S."/>
            <person name="Nakazaki N."/>
            <person name="Shinpo S."/>
            <person name="Takeuchi C."/>
            <person name="Wada T."/>
            <person name="Watanabe A."/>
            <person name="Yamada M."/>
            <person name="Yasuda M."/>
            <person name="Tabata S."/>
        </authorList>
    </citation>
    <scope>NUCLEOTIDE SEQUENCE [LARGE SCALE GENOMIC DNA]</scope>
    <source>
        <strain>cv. Columbia</strain>
    </source>
</reference>
<reference key="2">
    <citation type="journal article" date="2017" name="Plant J.">
        <title>Araport11: a complete reannotation of the Arabidopsis thaliana reference genome.</title>
        <authorList>
            <person name="Cheng C.Y."/>
            <person name="Krishnakumar V."/>
            <person name="Chan A.P."/>
            <person name="Thibaud-Nissen F."/>
            <person name="Schobel S."/>
            <person name="Town C.D."/>
        </authorList>
    </citation>
    <scope>GENOME REANNOTATION</scope>
    <source>
        <strain>cv. Columbia</strain>
    </source>
</reference>
<reference key="3">
    <citation type="submission" date="2004-09" db="EMBL/GenBank/DDBJ databases">
        <title>Large-scale analysis of RIKEN Arabidopsis full-length (RAFL) cDNAs.</title>
        <authorList>
            <person name="Totoki Y."/>
            <person name="Seki M."/>
            <person name="Ishida J."/>
            <person name="Nakajima M."/>
            <person name="Enju A."/>
            <person name="Kamiya A."/>
            <person name="Narusaka M."/>
            <person name="Shin-i T."/>
            <person name="Nakagawa M."/>
            <person name="Sakamoto N."/>
            <person name="Oishi K."/>
            <person name="Kohara Y."/>
            <person name="Kobayashi M."/>
            <person name="Toyoda A."/>
            <person name="Sakaki Y."/>
            <person name="Sakurai T."/>
            <person name="Iida K."/>
            <person name="Akiyama K."/>
            <person name="Satou M."/>
            <person name="Toyoda T."/>
            <person name="Konagaya A."/>
            <person name="Carninci P."/>
            <person name="Kawai J."/>
            <person name="Hayashizaki Y."/>
            <person name="Shinozaki K."/>
        </authorList>
    </citation>
    <scope>NUCLEOTIDE SEQUENCE [LARGE SCALE MRNA]</scope>
    <source>
        <strain>cv. Columbia</strain>
    </source>
</reference>
<reference key="4">
    <citation type="submission" date="2006-08" db="EMBL/GenBank/DDBJ databases">
        <title>Arabidopsis ORF clones.</title>
        <authorList>
            <person name="Quinitio C."/>
            <person name="Chen H."/>
            <person name="Kim C.J."/>
            <person name="Shinn P."/>
            <person name="Ecker J.R."/>
        </authorList>
    </citation>
    <scope>NUCLEOTIDE SEQUENCE [LARGE SCALE MRNA]</scope>
    <source>
        <strain>cv. Columbia</strain>
    </source>
</reference>
<reference key="5">
    <citation type="journal article" date="2003" name="Mol. Biol. Evol.">
        <title>The basic helix-loop-helix transcription factor family in plants: a genome-wide study of protein structure and functional diversity.</title>
        <authorList>
            <person name="Heim M.A."/>
            <person name="Jakoby M."/>
            <person name="Werber M."/>
            <person name="Martin C."/>
            <person name="Weisshaar B."/>
            <person name="Bailey P.C."/>
        </authorList>
    </citation>
    <scope>NUCLEOTIDE SEQUENCE [MRNA] OF 3-456</scope>
    <scope>TISSUE SPECIFICITY</scope>
    <scope>GENE FAMILY</scope>
    <scope>NOMENCLATURE</scope>
    <source>
        <strain>cv. Columbia</strain>
    </source>
</reference>
<reference key="6">
    <citation type="journal article" date="2003" name="Plant Cell">
        <title>The Arabidopsis basic/helix-loop-helix transcription factor family.</title>
        <authorList>
            <person name="Toledo-Ortiz G."/>
            <person name="Huq E."/>
            <person name="Quail P.H."/>
        </authorList>
    </citation>
    <scope>GENE FAMILY</scope>
</reference>
<reference key="7">
    <citation type="journal article" date="2003" name="Plant Cell">
        <title>Update on the basic helix-loop-helix transcription factor gene family in Arabidopsis thaliana.</title>
        <authorList>
            <person name="Bailey P.C."/>
            <person name="Martin C."/>
            <person name="Toledo-Ortiz G."/>
            <person name="Quail P.H."/>
            <person name="Huq E."/>
            <person name="Heim M.A."/>
            <person name="Jakoby M."/>
            <person name="Werber M."/>
            <person name="Weisshaar B."/>
        </authorList>
    </citation>
    <scope>GENE FAMILY</scope>
    <scope>NOMENCLATURE</scope>
</reference>
<organism>
    <name type="scientific">Arabidopsis thaliana</name>
    <name type="common">Mouse-ear cress</name>
    <dbReference type="NCBI Taxonomy" id="3702"/>
    <lineage>
        <taxon>Eukaryota</taxon>
        <taxon>Viridiplantae</taxon>
        <taxon>Streptophyta</taxon>
        <taxon>Embryophyta</taxon>
        <taxon>Tracheophyta</taxon>
        <taxon>Spermatophyta</taxon>
        <taxon>Magnoliopsida</taxon>
        <taxon>eudicotyledons</taxon>
        <taxon>Gunneridae</taxon>
        <taxon>Pentapetalae</taxon>
        <taxon>rosids</taxon>
        <taxon>malvids</taxon>
        <taxon>Brassicales</taxon>
        <taxon>Brassicaceae</taxon>
        <taxon>Camelineae</taxon>
        <taxon>Arabidopsis</taxon>
    </lineage>
</organism>
<dbReference type="EMBL" id="AC009853">
    <property type="protein sequence ID" value="AAF02164.1"/>
    <property type="molecule type" value="Genomic_DNA"/>
</dbReference>
<dbReference type="EMBL" id="CP002686">
    <property type="protein sequence ID" value="AEE74530.1"/>
    <property type="molecule type" value="Genomic_DNA"/>
</dbReference>
<dbReference type="EMBL" id="AK175369">
    <property type="protein sequence ID" value="BAD43132.1"/>
    <property type="molecule type" value="mRNA"/>
</dbReference>
<dbReference type="EMBL" id="AK175496">
    <property type="protein sequence ID" value="BAD43259.1"/>
    <property type="molecule type" value="mRNA"/>
</dbReference>
<dbReference type="EMBL" id="AK176563">
    <property type="protein sequence ID" value="BAD44326.1"/>
    <property type="molecule type" value="mRNA"/>
</dbReference>
<dbReference type="EMBL" id="AK176663">
    <property type="protein sequence ID" value="BAD44426.1"/>
    <property type="molecule type" value="mRNA"/>
</dbReference>
<dbReference type="EMBL" id="BT026497">
    <property type="protein sequence ID" value="ABH04604.1"/>
    <property type="molecule type" value="mRNA"/>
</dbReference>
<dbReference type="EMBL" id="AF488595">
    <property type="protein sequence ID" value="AAM10951.1"/>
    <property type="status" value="ALT_INIT"/>
    <property type="molecule type" value="mRNA"/>
</dbReference>
<dbReference type="RefSeq" id="NP_187390.1">
    <property type="nucleotide sequence ID" value="NM_111613.5"/>
</dbReference>
<dbReference type="SMR" id="Q9SRT2"/>
<dbReference type="BioGRID" id="5257">
    <property type="interactions" value="9"/>
</dbReference>
<dbReference type="FunCoup" id="Q9SRT2">
    <property type="interactions" value="109"/>
</dbReference>
<dbReference type="IntAct" id="Q9SRT2">
    <property type="interactions" value="5"/>
</dbReference>
<dbReference type="STRING" id="3702.Q9SRT2"/>
<dbReference type="GlyGen" id="Q9SRT2">
    <property type="glycosylation" value="1 site"/>
</dbReference>
<dbReference type="iPTMnet" id="Q9SRT2"/>
<dbReference type="PaxDb" id="3702-AT3G07340.1"/>
<dbReference type="ProteomicsDB" id="240404"/>
<dbReference type="EnsemblPlants" id="AT3G07340.1">
    <property type="protein sequence ID" value="AT3G07340.1"/>
    <property type="gene ID" value="AT3G07340"/>
</dbReference>
<dbReference type="GeneID" id="819922"/>
<dbReference type="Gramene" id="AT3G07340.1">
    <property type="protein sequence ID" value="AT3G07340.1"/>
    <property type="gene ID" value="AT3G07340"/>
</dbReference>
<dbReference type="KEGG" id="ath:AT3G07340"/>
<dbReference type="Araport" id="AT3G07340"/>
<dbReference type="TAIR" id="AT3G07340">
    <property type="gene designation" value="CIB3"/>
</dbReference>
<dbReference type="eggNOG" id="ENOG502QRSF">
    <property type="taxonomic scope" value="Eukaryota"/>
</dbReference>
<dbReference type="HOGENOM" id="CLU_025018_6_0_1"/>
<dbReference type="InParanoid" id="Q9SRT2"/>
<dbReference type="OMA" id="IHMGFAQ"/>
<dbReference type="PhylomeDB" id="Q9SRT2"/>
<dbReference type="PRO" id="PR:Q9SRT2"/>
<dbReference type="Proteomes" id="UP000006548">
    <property type="component" value="Chromosome 3"/>
</dbReference>
<dbReference type="ExpressionAtlas" id="Q9SRT2">
    <property type="expression patterns" value="baseline and differential"/>
</dbReference>
<dbReference type="GO" id="GO:0005634">
    <property type="term" value="C:nucleus"/>
    <property type="evidence" value="ECO:0007669"/>
    <property type="project" value="UniProtKB-SubCell"/>
</dbReference>
<dbReference type="GO" id="GO:0003700">
    <property type="term" value="F:DNA-binding transcription factor activity"/>
    <property type="evidence" value="ECO:0000250"/>
    <property type="project" value="TAIR"/>
</dbReference>
<dbReference type="GO" id="GO:0046983">
    <property type="term" value="F:protein dimerization activity"/>
    <property type="evidence" value="ECO:0007669"/>
    <property type="project" value="InterPro"/>
</dbReference>
<dbReference type="GO" id="GO:0000976">
    <property type="term" value="F:transcription cis-regulatory region binding"/>
    <property type="evidence" value="ECO:0000353"/>
    <property type="project" value="TAIR"/>
</dbReference>
<dbReference type="GO" id="GO:0006355">
    <property type="term" value="P:regulation of DNA-templated transcription"/>
    <property type="evidence" value="ECO:0000304"/>
    <property type="project" value="TAIR"/>
</dbReference>
<dbReference type="CDD" id="cd18919">
    <property type="entry name" value="bHLH_AtBPE_like"/>
    <property type="match status" value="1"/>
</dbReference>
<dbReference type="FunFam" id="4.10.280.10:FF:000002">
    <property type="entry name" value="Basic helix-loop-helix transcription factor"/>
    <property type="match status" value="1"/>
</dbReference>
<dbReference type="Gene3D" id="4.10.280.10">
    <property type="entry name" value="Helix-loop-helix DNA-binding domain"/>
    <property type="match status" value="1"/>
</dbReference>
<dbReference type="InterPro" id="IPR011598">
    <property type="entry name" value="bHLH_dom"/>
</dbReference>
<dbReference type="InterPro" id="IPR024097">
    <property type="entry name" value="bHLH_ZIP_TF"/>
</dbReference>
<dbReference type="InterPro" id="IPR036638">
    <property type="entry name" value="HLH_DNA-bd_sf"/>
</dbReference>
<dbReference type="PANTHER" id="PTHR12565">
    <property type="entry name" value="STEROL REGULATORY ELEMENT-BINDING PROTEIN"/>
    <property type="match status" value="1"/>
</dbReference>
<dbReference type="PANTHER" id="PTHR12565:SF444">
    <property type="entry name" value="TRANSCRIPTION FACTOR BHLH62-RELATED"/>
    <property type="match status" value="1"/>
</dbReference>
<dbReference type="Pfam" id="PF00010">
    <property type="entry name" value="HLH"/>
    <property type="match status" value="1"/>
</dbReference>
<dbReference type="SMART" id="SM00353">
    <property type="entry name" value="HLH"/>
    <property type="match status" value="1"/>
</dbReference>
<dbReference type="SUPFAM" id="SSF47459">
    <property type="entry name" value="HLH, helix-loop-helix DNA-binding domain"/>
    <property type="match status" value="1"/>
</dbReference>
<dbReference type="PROSITE" id="PS50888">
    <property type="entry name" value="BHLH"/>
    <property type="match status" value="1"/>
</dbReference>
<proteinExistence type="evidence at transcript level"/>
<keyword id="KW-0238">DNA-binding</keyword>
<keyword id="KW-0539">Nucleus</keyword>
<keyword id="KW-1185">Reference proteome</keyword>
<keyword id="KW-0804">Transcription</keyword>
<keyword id="KW-0805">Transcription regulation</keyword>
<feature type="chain" id="PRO_0000358757" description="Transcription factor bHLH62">
    <location>
        <begin position="1"/>
        <end position="456"/>
    </location>
</feature>
<feature type="domain" description="bHLH" evidence="1">
    <location>
        <begin position="264"/>
        <end position="314"/>
    </location>
</feature>
<feature type="region of interest" description="Disordered" evidence="2">
    <location>
        <begin position="159"/>
        <end position="254"/>
    </location>
</feature>
<feature type="compositionally biased region" description="Polar residues" evidence="2">
    <location>
        <begin position="159"/>
        <end position="185"/>
    </location>
</feature>
<feature type="compositionally biased region" description="Basic and acidic residues" evidence="2">
    <location>
        <begin position="223"/>
        <end position="254"/>
    </location>
</feature>
<feature type="sequence conflict" description="In Ref. 3; BAD44326/BAD44426." evidence="4" ref="3">
    <original>E</original>
    <variation>G</variation>
    <location>
        <position position="421"/>
    </location>
</feature>
<accession>Q9SRT2</accession>
<accession>Q67Y05</accession>
<accession>Q8S3E0</accession>
<sequence>MENELFMNAGVSHPPVMTSPSSSSAMLKWVSMETQPVDPSLSRNLFWEKSTEQSIFDSALSSLVSSPTPSNSNFSVGGVGGENVIMRELIGKLGNIGDIYGITASNGNSCYATPMSSPPPGSMMETKTTTPMAELSGDPGFAERAARFSCFGSRSFNSRTNSPFPINNEPPITTNEKMPRVSSSPVFKPLASHVPAGESSGELSRKRKTKSKQNSPSAVSSSKEIEEKEDSDPKRCKKSEENGDKTKSIDPYKDYIHVRARRGQATDSHSLAERVRREKISERMKLLQDLVPGCNKVTGKALMLDEIINYVQSLQRQVEFLSMKLSSVNTRLDFNMDALLSKDIFPSSNNLMHHQQVLQLDSSAETLLGDHHNKNLQLNPDISSNNVINPLETSETRSFISHLPTLAHFTDSISQYSTFSEDDLHSIIHMGFAQNRLQELNQGSSNQVPSHMKAEL</sequence>
<name>BH062_ARATH</name>
<comment type="subunit">
    <text evidence="4">Homodimer.</text>
</comment>
<comment type="subcellular location">
    <subcellularLocation>
        <location evidence="1">Nucleus</location>
    </subcellularLocation>
</comment>
<comment type="tissue specificity">
    <text evidence="3">Expressed constitutively in roots, leaves, stems, and flowers.</text>
</comment>
<comment type="sequence caution" evidence="4">
    <conflict type="erroneous initiation">
        <sequence resource="EMBL-CDS" id="AAM10951"/>
    </conflict>
    <text>Truncated N-terminus.</text>
</comment>
<evidence type="ECO:0000255" key="1">
    <source>
        <dbReference type="PROSITE-ProRule" id="PRU00981"/>
    </source>
</evidence>
<evidence type="ECO:0000256" key="2">
    <source>
        <dbReference type="SAM" id="MobiDB-lite"/>
    </source>
</evidence>
<evidence type="ECO:0000269" key="3">
    <source>
    </source>
</evidence>
<evidence type="ECO:0000305" key="4"/>
<protein>
    <recommendedName>
        <fullName>Transcription factor bHLH62</fullName>
    </recommendedName>
    <alternativeName>
        <fullName>Basic helix-loop-helix protein 62</fullName>
        <shortName>AtbHLH62</shortName>
        <shortName>bHLH 62</shortName>
    </alternativeName>
    <alternativeName>
        <fullName>Transcription factor EN 85</fullName>
    </alternativeName>
    <alternativeName>
        <fullName>bHLH transcription factor bHLH062</fullName>
    </alternativeName>
</protein>